<proteinExistence type="inferred from homology"/>
<sequence>MSIISAEAQKVREALIAKGIETPTVQLTKDKDSRRAEIQQHMRSVLELLGLDLQDDSLEETPHRLAKMYVDEIFSGLDYATFPKITNIENRMKVSEMVLVDDITLTSTCEHHFVTIDGKVAVAYYPKKWVIGLSKINRVVQFFAQRPQVQERFTEQILTAFQTILETDDVAVFVKATHFCVKCRGVKDTNSYTVTSAFGGVFLEDRETRKEFLGLINK</sequence>
<organism>
    <name type="scientific">Actinobacillus pleuropneumoniae serotype 7 (strain AP76)</name>
    <dbReference type="NCBI Taxonomy" id="537457"/>
    <lineage>
        <taxon>Bacteria</taxon>
        <taxon>Pseudomonadati</taxon>
        <taxon>Pseudomonadota</taxon>
        <taxon>Gammaproteobacteria</taxon>
        <taxon>Pasteurellales</taxon>
        <taxon>Pasteurellaceae</taxon>
        <taxon>Actinobacillus</taxon>
    </lineage>
</organism>
<accession>B3GXP9</accession>
<reference key="1">
    <citation type="submission" date="2008-06" db="EMBL/GenBank/DDBJ databases">
        <title>Genome and proteome analysis of A. pleuropneumoniae serotype 7.</title>
        <authorList>
            <person name="Linke B."/>
            <person name="Buettner F."/>
            <person name="Martinez-Arias R."/>
            <person name="Goesmann A."/>
            <person name="Baltes N."/>
            <person name="Tegetmeyer H."/>
            <person name="Singh M."/>
            <person name="Gerlach G.F."/>
        </authorList>
    </citation>
    <scope>NUCLEOTIDE SEQUENCE [LARGE SCALE GENOMIC DNA]</scope>
    <source>
        <strain>AP76</strain>
    </source>
</reference>
<dbReference type="EC" id="3.5.4.16" evidence="1"/>
<dbReference type="EMBL" id="CP001091">
    <property type="protein sequence ID" value="ACE61614.1"/>
    <property type="molecule type" value="Genomic_DNA"/>
</dbReference>
<dbReference type="RefSeq" id="WP_005601234.1">
    <property type="nucleotide sequence ID" value="NC_010939.1"/>
</dbReference>
<dbReference type="SMR" id="B3GXP9"/>
<dbReference type="KEGG" id="apa:APP7_0962"/>
<dbReference type="HOGENOM" id="CLU_049768_3_2_6"/>
<dbReference type="UniPathway" id="UPA00848">
    <property type="reaction ID" value="UER00151"/>
</dbReference>
<dbReference type="Proteomes" id="UP000001226">
    <property type="component" value="Chromosome"/>
</dbReference>
<dbReference type="GO" id="GO:0005737">
    <property type="term" value="C:cytoplasm"/>
    <property type="evidence" value="ECO:0007669"/>
    <property type="project" value="TreeGrafter"/>
</dbReference>
<dbReference type="GO" id="GO:0005525">
    <property type="term" value="F:GTP binding"/>
    <property type="evidence" value="ECO:0007669"/>
    <property type="project" value="UniProtKB-KW"/>
</dbReference>
<dbReference type="GO" id="GO:0003934">
    <property type="term" value="F:GTP cyclohydrolase I activity"/>
    <property type="evidence" value="ECO:0007669"/>
    <property type="project" value="UniProtKB-UniRule"/>
</dbReference>
<dbReference type="GO" id="GO:0008270">
    <property type="term" value="F:zinc ion binding"/>
    <property type="evidence" value="ECO:0007669"/>
    <property type="project" value="UniProtKB-UniRule"/>
</dbReference>
<dbReference type="GO" id="GO:0006730">
    <property type="term" value="P:one-carbon metabolic process"/>
    <property type="evidence" value="ECO:0007669"/>
    <property type="project" value="UniProtKB-UniRule"/>
</dbReference>
<dbReference type="GO" id="GO:0006729">
    <property type="term" value="P:tetrahydrobiopterin biosynthetic process"/>
    <property type="evidence" value="ECO:0007669"/>
    <property type="project" value="TreeGrafter"/>
</dbReference>
<dbReference type="GO" id="GO:0046654">
    <property type="term" value="P:tetrahydrofolate biosynthetic process"/>
    <property type="evidence" value="ECO:0007669"/>
    <property type="project" value="UniProtKB-UniRule"/>
</dbReference>
<dbReference type="CDD" id="cd00642">
    <property type="entry name" value="GTP_cyclohydro1"/>
    <property type="match status" value="1"/>
</dbReference>
<dbReference type="FunFam" id="3.30.1130.10:FF:000001">
    <property type="entry name" value="GTP cyclohydrolase 1"/>
    <property type="match status" value="1"/>
</dbReference>
<dbReference type="Gene3D" id="1.10.286.10">
    <property type="match status" value="1"/>
</dbReference>
<dbReference type="Gene3D" id="3.30.1130.10">
    <property type="match status" value="1"/>
</dbReference>
<dbReference type="HAMAP" id="MF_00223">
    <property type="entry name" value="FolE"/>
    <property type="match status" value="1"/>
</dbReference>
<dbReference type="InterPro" id="IPR043133">
    <property type="entry name" value="GTP-CH-I_C/QueF"/>
</dbReference>
<dbReference type="InterPro" id="IPR043134">
    <property type="entry name" value="GTP-CH-I_N"/>
</dbReference>
<dbReference type="InterPro" id="IPR001474">
    <property type="entry name" value="GTP_CycHdrlase_I"/>
</dbReference>
<dbReference type="InterPro" id="IPR018234">
    <property type="entry name" value="GTP_CycHdrlase_I_CS"/>
</dbReference>
<dbReference type="InterPro" id="IPR020602">
    <property type="entry name" value="GTP_CycHdrlase_I_dom"/>
</dbReference>
<dbReference type="NCBIfam" id="TIGR00063">
    <property type="entry name" value="folE"/>
    <property type="match status" value="1"/>
</dbReference>
<dbReference type="NCBIfam" id="NF006824">
    <property type="entry name" value="PRK09347.1-1"/>
    <property type="match status" value="1"/>
</dbReference>
<dbReference type="NCBIfam" id="NF006825">
    <property type="entry name" value="PRK09347.1-2"/>
    <property type="match status" value="1"/>
</dbReference>
<dbReference type="NCBIfam" id="NF006826">
    <property type="entry name" value="PRK09347.1-3"/>
    <property type="match status" value="1"/>
</dbReference>
<dbReference type="PANTHER" id="PTHR11109:SF7">
    <property type="entry name" value="GTP CYCLOHYDROLASE 1"/>
    <property type="match status" value="1"/>
</dbReference>
<dbReference type="PANTHER" id="PTHR11109">
    <property type="entry name" value="GTP CYCLOHYDROLASE I"/>
    <property type="match status" value="1"/>
</dbReference>
<dbReference type="Pfam" id="PF01227">
    <property type="entry name" value="GTP_cyclohydroI"/>
    <property type="match status" value="1"/>
</dbReference>
<dbReference type="SUPFAM" id="SSF55620">
    <property type="entry name" value="Tetrahydrobiopterin biosynthesis enzymes-like"/>
    <property type="match status" value="1"/>
</dbReference>
<dbReference type="PROSITE" id="PS00859">
    <property type="entry name" value="GTP_CYCLOHYDROL_1_1"/>
    <property type="match status" value="1"/>
</dbReference>
<keyword id="KW-0342">GTP-binding</keyword>
<keyword id="KW-0378">Hydrolase</keyword>
<keyword id="KW-0479">Metal-binding</keyword>
<keyword id="KW-0547">Nucleotide-binding</keyword>
<keyword id="KW-0554">One-carbon metabolism</keyword>
<keyword id="KW-0862">Zinc</keyword>
<evidence type="ECO:0000255" key="1">
    <source>
        <dbReference type="HAMAP-Rule" id="MF_00223"/>
    </source>
</evidence>
<feature type="chain" id="PRO_1000100158" description="GTP cyclohydrolase 1">
    <location>
        <begin position="1"/>
        <end position="218"/>
    </location>
</feature>
<feature type="binding site" evidence="1">
    <location>
        <position position="109"/>
    </location>
    <ligand>
        <name>Zn(2+)</name>
        <dbReference type="ChEBI" id="CHEBI:29105"/>
    </ligand>
</feature>
<feature type="binding site" evidence="1">
    <location>
        <position position="112"/>
    </location>
    <ligand>
        <name>Zn(2+)</name>
        <dbReference type="ChEBI" id="CHEBI:29105"/>
    </ligand>
</feature>
<feature type="binding site" evidence="1">
    <location>
        <position position="180"/>
    </location>
    <ligand>
        <name>Zn(2+)</name>
        <dbReference type="ChEBI" id="CHEBI:29105"/>
    </ligand>
</feature>
<protein>
    <recommendedName>
        <fullName evidence="1">GTP cyclohydrolase 1</fullName>
        <ecNumber evidence="1">3.5.4.16</ecNumber>
    </recommendedName>
    <alternativeName>
        <fullName evidence="1">GTP cyclohydrolase I</fullName>
        <shortName evidence="1">GTP-CH-I</shortName>
    </alternativeName>
</protein>
<name>GCH1_ACTP7</name>
<comment type="catalytic activity">
    <reaction evidence="1">
        <text>GTP + H2O = 7,8-dihydroneopterin 3'-triphosphate + formate + H(+)</text>
        <dbReference type="Rhea" id="RHEA:17473"/>
        <dbReference type="ChEBI" id="CHEBI:15377"/>
        <dbReference type="ChEBI" id="CHEBI:15378"/>
        <dbReference type="ChEBI" id="CHEBI:15740"/>
        <dbReference type="ChEBI" id="CHEBI:37565"/>
        <dbReference type="ChEBI" id="CHEBI:58462"/>
        <dbReference type="EC" id="3.5.4.16"/>
    </reaction>
</comment>
<comment type="pathway">
    <text evidence="1">Cofactor biosynthesis; 7,8-dihydroneopterin triphosphate biosynthesis; 7,8-dihydroneopterin triphosphate from GTP: step 1/1.</text>
</comment>
<comment type="subunit">
    <text evidence="1">Homomer.</text>
</comment>
<comment type="similarity">
    <text evidence="1">Belongs to the GTP cyclohydrolase I family.</text>
</comment>
<gene>
    <name evidence="1" type="primary">folE</name>
    <name type="ordered locus">APP7_0962</name>
</gene>